<name>Y2424_STAA3</name>
<organism>
    <name type="scientific">Staphylococcus aureus (strain USA300)</name>
    <dbReference type="NCBI Taxonomy" id="367830"/>
    <lineage>
        <taxon>Bacteria</taxon>
        <taxon>Bacillati</taxon>
        <taxon>Bacillota</taxon>
        <taxon>Bacilli</taxon>
        <taxon>Bacillales</taxon>
        <taxon>Staphylococcaceae</taxon>
        <taxon>Staphylococcus</taxon>
    </lineage>
</organism>
<reference key="1">
    <citation type="journal article" date="2006" name="Lancet">
        <title>Complete genome sequence of USA300, an epidemic clone of community-acquired meticillin-resistant Staphylococcus aureus.</title>
        <authorList>
            <person name="Diep B.A."/>
            <person name="Gill S.R."/>
            <person name="Chang R.F."/>
            <person name="Phan T.H."/>
            <person name="Chen J.H."/>
            <person name="Davidson M.G."/>
            <person name="Lin F."/>
            <person name="Lin J."/>
            <person name="Carleton H.A."/>
            <person name="Mongodin E.F."/>
            <person name="Sensabaugh G.F."/>
            <person name="Perdreau-Remington F."/>
        </authorList>
    </citation>
    <scope>NUCLEOTIDE SEQUENCE [LARGE SCALE GENOMIC DNA]</scope>
    <source>
        <strain>USA300</strain>
    </source>
</reference>
<comment type="subcellular location">
    <subcellularLocation>
        <location evidence="2">Cell membrane</location>
        <topology evidence="2">Single-pass membrane protein</topology>
    </subcellularLocation>
</comment>
<comment type="similarity">
    <text evidence="2">Belongs to the staphylococcal tandem lipoprotein family.</text>
</comment>
<protein>
    <recommendedName>
        <fullName>Uncharacterized protein SAUSA300_2424</fullName>
    </recommendedName>
</protein>
<keyword id="KW-1003">Cell membrane</keyword>
<keyword id="KW-0472">Membrane</keyword>
<keyword id="KW-0812">Transmembrane</keyword>
<keyword id="KW-1133">Transmembrane helix</keyword>
<evidence type="ECO:0000255" key="1"/>
<evidence type="ECO:0000305" key="2"/>
<accession>Q2FE19</accession>
<sequence>MIHSKKLTLGICLVLLIILIVGYVIMTKTNGRNAQIKDTFNQTLKLYPTKNLDDFYDKEGFRDQEFKKGDKGTWIVNSEMVIEPKGKDMETRGMVLYINRNTRTTKGYYFISEMTDDSNGRPKDDEKRYPVKMEHNKIIPTKPLPNDKLKKEIENFKFFVQYGNFKDINDYKDGDISYNPNVPSYSAKYQLNNDDYNVQQLRKRYDIPTKQAPKLLLKGDGDLKGSSVGSRSLEFTFVENKEENIYFTDSVQYTPSEDTRYESN</sequence>
<feature type="chain" id="PRO_0000282073" description="Uncharacterized protein SAUSA300_2424">
    <location>
        <begin position="1"/>
        <end position="264"/>
    </location>
</feature>
<feature type="transmembrane region" description="Helical" evidence="1">
    <location>
        <begin position="7"/>
        <end position="27"/>
    </location>
</feature>
<dbReference type="EMBL" id="CP000255">
    <property type="protein sequence ID" value="ABD22766.1"/>
    <property type="molecule type" value="Genomic_DNA"/>
</dbReference>
<dbReference type="RefSeq" id="WP_000581889.1">
    <property type="nucleotide sequence ID" value="NZ_CP027476.1"/>
</dbReference>
<dbReference type="SMR" id="Q2FE19"/>
<dbReference type="KEGG" id="saa:SAUSA300_2424"/>
<dbReference type="HOGENOM" id="CLU_071589_0_1_9"/>
<dbReference type="OMA" id="NLKFFVQ"/>
<dbReference type="Proteomes" id="UP000001939">
    <property type="component" value="Chromosome"/>
</dbReference>
<dbReference type="GO" id="GO:0005886">
    <property type="term" value="C:plasma membrane"/>
    <property type="evidence" value="ECO:0007669"/>
    <property type="project" value="UniProtKB-SubCell"/>
</dbReference>
<dbReference type="Gene3D" id="2.50.20.40">
    <property type="match status" value="1"/>
</dbReference>
<dbReference type="InterPro" id="IPR007595">
    <property type="entry name" value="Csa"/>
</dbReference>
<dbReference type="InterPro" id="IPR038641">
    <property type="entry name" value="Csa_sf"/>
</dbReference>
<dbReference type="NCBIfam" id="TIGR01742">
    <property type="entry name" value="SA_tandem_lipo"/>
    <property type="match status" value="1"/>
</dbReference>
<dbReference type="Pfam" id="PF04507">
    <property type="entry name" value="DUF576"/>
    <property type="match status" value="1"/>
</dbReference>
<proteinExistence type="inferred from homology"/>
<gene>
    <name type="ordered locus">SAUSA300_2424</name>
</gene>